<accession>Q9SW33</accession>
<keyword id="KW-0150">Chloroplast</keyword>
<keyword id="KW-0903">Direct protein sequencing</keyword>
<keyword id="KW-0934">Plastid</keyword>
<keyword id="KW-1185">Reference proteome</keyword>
<keyword id="KW-0793">Thylakoid</keyword>
<keyword id="KW-0809">Transit peptide</keyword>
<gene>
    <name type="ordered locus">At4g24930</name>
    <name type="ORF">F13M23.70</name>
</gene>
<reference key="1">
    <citation type="journal article" date="1999" name="Nature">
        <title>Sequence and analysis of chromosome 4 of the plant Arabidopsis thaliana.</title>
        <authorList>
            <person name="Mayer K.F.X."/>
            <person name="Schueller C."/>
            <person name="Wambutt R."/>
            <person name="Murphy G."/>
            <person name="Volckaert G."/>
            <person name="Pohl T."/>
            <person name="Duesterhoeft A."/>
            <person name="Stiekema W."/>
            <person name="Entian K.-D."/>
            <person name="Terryn N."/>
            <person name="Harris B."/>
            <person name="Ansorge W."/>
            <person name="Brandt P."/>
            <person name="Grivell L.A."/>
            <person name="Rieger M."/>
            <person name="Weichselgartner M."/>
            <person name="de Simone V."/>
            <person name="Obermaier B."/>
            <person name="Mache R."/>
            <person name="Mueller M."/>
            <person name="Kreis M."/>
            <person name="Delseny M."/>
            <person name="Puigdomenech P."/>
            <person name="Watson M."/>
            <person name="Schmidtheini T."/>
            <person name="Reichert B."/>
            <person name="Portetelle D."/>
            <person name="Perez-Alonso M."/>
            <person name="Boutry M."/>
            <person name="Bancroft I."/>
            <person name="Vos P."/>
            <person name="Hoheisel J."/>
            <person name="Zimmermann W."/>
            <person name="Wedler H."/>
            <person name="Ridley P."/>
            <person name="Langham S.-A."/>
            <person name="McCullagh B."/>
            <person name="Bilham L."/>
            <person name="Robben J."/>
            <person name="van der Schueren J."/>
            <person name="Grymonprez B."/>
            <person name="Chuang Y.-J."/>
            <person name="Vandenbussche F."/>
            <person name="Braeken M."/>
            <person name="Weltjens I."/>
            <person name="Voet M."/>
            <person name="Bastiaens I."/>
            <person name="Aert R."/>
            <person name="Defoor E."/>
            <person name="Weitzenegger T."/>
            <person name="Bothe G."/>
            <person name="Ramsperger U."/>
            <person name="Hilbert H."/>
            <person name="Braun M."/>
            <person name="Holzer E."/>
            <person name="Brandt A."/>
            <person name="Peters S."/>
            <person name="van Staveren M."/>
            <person name="Dirkse W."/>
            <person name="Mooijman P."/>
            <person name="Klein Lankhorst R."/>
            <person name="Rose M."/>
            <person name="Hauf J."/>
            <person name="Koetter P."/>
            <person name="Berneiser S."/>
            <person name="Hempel S."/>
            <person name="Feldpausch M."/>
            <person name="Lamberth S."/>
            <person name="Van den Daele H."/>
            <person name="De Keyser A."/>
            <person name="Buysshaert C."/>
            <person name="Gielen J."/>
            <person name="Villarroel R."/>
            <person name="De Clercq R."/>
            <person name="van Montagu M."/>
            <person name="Rogers J."/>
            <person name="Cronin A."/>
            <person name="Quail M.A."/>
            <person name="Bray-Allen S."/>
            <person name="Clark L."/>
            <person name="Doggett J."/>
            <person name="Hall S."/>
            <person name="Kay M."/>
            <person name="Lennard N."/>
            <person name="McLay K."/>
            <person name="Mayes R."/>
            <person name="Pettett A."/>
            <person name="Rajandream M.A."/>
            <person name="Lyne M."/>
            <person name="Benes V."/>
            <person name="Rechmann S."/>
            <person name="Borkova D."/>
            <person name="Bloecker H."/>
            <person name="Scharfe M."/>
            <person name="Grimm M."/>
            <person name="Loehnert T.-H."/>
            <person name="Dose S."/>
            <person name="de Haan M."/>
            <person name="Maarse A.C."/>
            <person name="Schaefer M."/>
            <person name="Mueller-Auer S."/>
            <person name="Gabel C."/>
            <person name="Fuchs M."/>
            <person name="Fartmann B."/>
            <person name="Granderath K."/>
            <person name="Dauner D."/>
            <person name="Herzl A."/>
            <person name="Neumann S."/>
            <person name="Argiriou A."/>
            <person name="Vitale D."/>
            <person name="Liguori R."/>
            <person name="Piravandi E."/>
            <person name="Massenet O."/>
            <person name="Quigley F."/>
            <person name="Clabauld G."/>
            <person name="Muendlein A."/>
            <person name="Felber R."/>
            <person name="Schnabl S."/>
            <person name="Hiller R."/>
            <person name="Schmidt W."/>
            <person name="Lecharny A."/>
            <person name="Aubourg S."/>
            <person name="Chefdor F."/>
            <person name="Cooke R."/>
            <person name="Berger C."/>
            <person name="Monfort A."/>
            <person name="Casacuberta E."/>
            <person name="Gibbons T."/>
            <person name="Weber N."/>
            <person name="Vandenbol M."/>
            <person name="Bargues M."/>
            <person name="Terol J."/>
            <person name="Torres A."/>
            <person name="Perez-Perez A."/>
            <person name="Purnelle B."/>
            <person name="Bent E."/>
            <person name="Johnson S."/>
            <person name="Tacon D."/>
            <person name="Jesse T."/>
            <person name="Heijnen L."/>
            <person name="Schwarz S."/>
            <person name="Scholler P."/>
            <person name="Heber S."/>
            <person name="Francs P."/>
            <person name="Bielke C."/>
            <person name="Frishman D."/>
            <person name="Haase D."/>
            <person name="Lemcke K."/>
            <person name="Mewes H.-W."/>
            <person name="Stocker S."/>
            <person name="Zaccaria P."/>
            <person name="Bevan M."/>
            <person name="Wilson R.K."/>
            <person name="de la Bastide M."/>
            <person name="Habermann K."/>
            <person name="Parnell L."/>
            <person name="Dedhia N."/>
            <person name="Gnoj L."/>
            <person name="Schutz K."/>
            <person name="Huang E."/>
            <person name="Spiegel L."/>
            <person name="Sekhon M."/>
            <person name="Murray J."/>
            <person name="Sheet P."/>
            <person name="Cordes M."/>
            <person name="Abu-Threideh J."/>
            <person name="Stoneking T."/>
            <person name="Kalicki J."/>
            <person name="Graves T."/>
            <person name="Harmon G."/>
            <person name="Edwards J."/>
            <person name="Latreille P."/>
            <person name="Courtney L."/>
            <person name="Cloud J."/>
            <person name="Abbott A."/>
            <person name="Scott K."/>
            <person name="Johnson D."/>
            <person name="Minx P."/>
            <person name="Bentley D."/>
            <person name="Fulton B."/>
            <person name="Miller N."/>
            <person name="Greco T."/>
            <person name="Kemp K."/>
            <person name="Kramer J."/>
            <person name="Fulton L."/>
            <person name="Mardis E."/>
            <person name="Dante M."/>
            <person name="Pepin K."/>
            <person name="Hillier L.W."/>
            <person name="Nelson J."/>
            <person name="Spieth J."/>
            <person name="Ryan E."/>
            <person name="Andrews S."/>
            <person name="Geisel C."/>
            <person name="Layman D."/>
            <person name="Du H."/>
            <person name="Ali J."/>
            <person name="Berghoff A."/>
            <person name="Jones K."/>
            <person name="Drone K."/>
            <person name="Cotton M."/>
            <person name="Joshu C."/>
            <person name="Antonoiu B."/>
            <person name="Zidanic M."/>
            <person name="Strong C."/>
            <person name="Sun H."/>
            <person name="Lamar B."/>
            <person name="Yordan C."/>
            <person name="Ma P."/>
            <person name="Zhong J."/>
            <person name="Preston R."/>
            <person name="Vil D."/>
            <person name="Shekher M."/>
            <person name="Matero A."/>
            <person name="Shah R."/>
            <person name="Swaby I.K."/>
            <person name="O'Shaughnessy A."/>
            <person name="Rodriguez M."/>
            <person name="Hoffman J."/>
            <person name="Till S."/>
            <person name="Granat S."/>
            <person name="Shohdy N."/>
            <person name="Hasegawa A."/>
            <person name="Hameed A."/>
            <person name="Lodhi M."/>
            <person name="Johnson A."/>
            <person name="Chen E."/>
            <person name="Marra M.A."/>
            <person name="Martienssen R."/>
            <person name="McCombie W.R."/>
        </authorList>
    </citation>
    <scope>NUCLEOTIDE SEQUENCE [LARGE SCALE GENOMIC DNA]</scope>
    <source>
        <strain>cv. Columbia</strain>
    </source>
</reference>
<reference key="2">
    <citation type="journal article" date="2017" name="Plant J.">
        <title>Araport11: a complete reannotation of the Arabidopsis thaliana reference genome.</title>
        <authorList>
            <person name="Cheng C.Y."/>
            <person name="Krishnakumar V."/>
            <person name="Chan A.P."/>
            <person name="Thibaud-Nissen F."/>
            <person name="Schobel S."/>
            <person name="Town C.D."/>
        </authorList>
    </citation>
    <scope>GENOME REANNOTATION</scope>
    <source>
        <strain>cv. Columbia</strain>
    </source>
</reference>
<reference key="3">
    <citation type="journal article" date="2003" name="Science">
        <title>Empirical analysis of transcriptional activity in the Arabidopsis genome.</title>
        <authorList>
            <person name="Yamada K."/>
            <person name="Lim J."/>
            <person name="Dale J.M."/>
            <person name="Chen H."/>
            <person name="Shinn P."/>
            <person name="Palm C.J."/>
            <person name="Southwick A.M."/>
            <person name="Wu H.C."/>
            <person name="Kim C.J."/>
            <person name="Nguyen M."/>
            <person name="Pham P.K."/>
            <person name="Cheuk R.F."/>
            <person name="Karlin-Newmann G."/>
            <person name="Liu S.X."/>
            <person name="Lam B."/>
            <person name="Sakano H."/>
            <person name="Wu T."/>
            <person name="Yu G."/>
            <person name="Miranda M."/>
            <person name="Quach H.L."/>
            <person name="Tripp M."/>
            <person name="Chang C.H."/>
            <person name="Lee J.M."/>
            <person name="Toriumi M.J."/>
            <person name="Chan M.M."/>
            <person name="Tang C.C."/>
            <person name="Onodera C.S."/>
            <person name="Deng J.M."/>
            <person name="Akiyama K."/>
            <person name="Ansari Y."/>
            <person name="Arakawa T."/>
            <person name="Banh J."/>
            <person name="Banno F."/>
            <person name="Bowser L."/>
            <person name="Brooks S.Y."/>
            <person name="Carninci P."/>
            <person name="Chao Q."/>
            <person name="Choy N."/>
            <person name="Enju A."/>
            <person name="Goldsmith A.D."/>
            <person name="Gurjal M."/>
            <person name="Hansen N.F."/>
            <person name="Hayashizaki Y."/>
            <person name="Johnson-Hopson C."/>
            <person name="Hsuan V.W."/>
            <person name="Iida K."/>
            <person name="Karnes M."/>
            <person name="Khan S."/>
            <person name="Koesema E."/>
            <person name="Ishida J."/>
            <person name="Jiang P.X."/>
            <person name="Jones T."/>
            <person name="Kawai J."/>
            <person name="Kamiya A."/>
            <person name="Meyers C."/>
            <person name="Nakajima M."/>
            <person name="Narusaka M."/>
            <person name="Seki M."/>
            <person name="Sakurai T."/>
            <person name="Satou M."/>
            <person name="Tamse R."/>
            <person name="Vaysberg M."/>
            <person name="Wallender E.K."/>
            <person name="Wong C."/>
            <person name="Yamamura Y."/>
            <person name="Yuan S."/>
            <person name="Shinozaki K."/>
            <person name="Davis R.W."/>
            <person name="Theologis A."/>
            <person name="Ecker J.R."/>
        </authorList>
    </citation>
    <scope>NUCLEOTIDE SEQUENCE [LARGE SCALE MRNA]</scope>
    <source>
        <strain>cv. Columbia</strain>
    </source>
</reference>
<reference key="4">
    <citation type="journal article" date="2002" name="J. Biol. Chem.">
        <title>Proteome map of the chloroplast lumen of Arabidopsis thaliana.</title>
        <authorList>
            <person name="Schubert M."/>
            <person name="Petersson U.A."/>
            <person name="Haas B.J."/>
            <person name="Funk C."/>
            <person name="Schroeder W.P."/>
            <person name="Kieselbach T."/>
        </authorList>
    </citation>
    <scope>PROTEIN SEQUENCE OF 64-93</scope>
    <scope>SUBCELLULAR LOCATION</scope>
</reference>
<protein>
    <recommendedName>
        <fullName>Thylakoid lumenal 17.9 kDa protein, chloroplastic</fullName>
    </recommendedName>
</protein>
<proteinExistence type="evidence at protein level"/>
<name>TL1Y_ARATH</name>
<sequence>MSLVASLQLILPPRPRSTKLLCSLQSPKQEQELSSTSPPISLLPKLISFALAISLTSFSPALAIPSLSSSQPLTTPFTQSKFVQTGLLNGKIRPCPSTNPGCVSTNPTSSSFSFPLTIPETDTQDPIEKLKEAIMSTQKNPKFVVLEDTPYGRYVEAEVEGGGFSRDVMEFLVKQDVVAYRCMATKVTFVYPFTTAFGDSKGQEERLKKLIDQLGWYAPTFESME</sequence>
<organism>
    <name type="scientific">Arabidopsis thaliana</name>
    <name type="common">Mouse-ear cress</name>
    <dbReference type="NCBI Taxonomy" id="3702"/>
    <lineage>
        <taxon>Eukaryota</taxon>
        <taxon>Viridiplantae</taxon>
        <taxon>Streptophyta</taxon>
        <taxon>Embryophyta</taxon>
        <taxon>Tracheophyta</taxon>
        <taxon>Spermatophyta</taxon>
        <taxon>Magnoliopsida</taxon>
        <taxon>eudicotyledons</taxon>
        <taxon>Gunneridae</taxon>
        <taxon>Pentapetalae</taxon>
        <taxon>rosids</taxon>
        <taxon>malvids</taxon>
        <taxon>Brassicales</taxon>
        <taxon>Brassicaceae</taxon>
        <taxon>Camelineae</taxon>
        <taxon>Arabidopsis</taxon>
    </lineage>
</organism>
<evidence type="ECO:0000255" key="1"/>
<evidence type="ECO:0000269" key="2">
    <source>
    </source>
</evidence>
<dbReference type="EMBL" id="AL035523">
    <property type="protein sequence ID" value="CAB36735.1"/>
    <property type="molecule type" value="Genomic_DNA"/>
</dbReference>
<dbReference type="EMBL" id="AL161562">
    <property type="protein sequence ID" value="CAB79402.1"/>
    <property type="molecule type" value="Genomic_DNA"/>
</dbReference>
<dbReference type="EMBL" id="CP002687">
    <property type="protein sequence ID" value="AEE84977.1"/>
    <property type="molecule type" value="Genomic_DNA"/>
</dbReference>
<dbReference type="EMBL" id="AY093198">
    <property type="protein sequence ID" value="AAM13197.1"/>
    <property type="molecule type" value="mRNA"/>
</dbReference>
<dbReference type="EMBL" id="BT006274">
    <property type="protein sequence ID" value="AAP13382.1"/>
    <property type="molecule type" value="mRNA"/>
</dbReference>
<dbReference type="PIR" id="T05514">
    <property type="entry name" value="T05514"/>
</dbReference>
<dbReference type="RefSeq" id="NP_194223.1">
    <property type="nucleotide sequence ID" value="NM_118625.3"/>
</dbReference>
<dbReference type="FunCoup" id="Q9SW33">
    <property type="interactions" value="1649"/>
</dbReference>
<dbReference type="STRING" id="3702.Q9SW33"/>
<dbReference type="MetOSite" id="Q9SW33"/>
<dbReference type="PaxDb" id="3702-AT4G24930.1"/>
<dbReference type="ProteomicsDB" id="246448"/>
<dbReference type="EnsemblPlants" id="AT4G24930.1">
    <property type="protein sequence ID" value="AT4G24930.1"/>
    <property type="gene ID" value="AT4G24930"/>
</dbReference>
<dbReference type="GeneID" id="828595"/>
<dbReference type="Gramene" id="AT4G24930.1">
    <property type="protein sequence ID" value="AT4G24930.1"/>
    <property type="gene ID" value="AT4G24930"/>
</dbReference>
<dbReference type="KEGG" id="ath:AT4G24930"/>
<dbReference type="Araport" id="AT4G24930"/>
<dbReference type="TAIR" id="AT4G24930"/>
<dbReference type="eggNOG" id="ENOG502QS2R">
    <property type="taxonomic scope" value="Eukaryota"/>
</dbReference>
<dbReference type="HOGENOM" id="CLU_099218_1_0_1"/>
<dbReference type="InParanoid" id="Q9SW33"/>
<dbReference type="OMA" id="EELGWYA"/>
<dbReference type="PhylomeDB" id="Q9SW33"/>
<dbReference type="PRO" id="PR:Q9SW33"/>
<dbReference type="Proteomes" id="UP000006548">
    <property type="component" value="Chromosome 4"/>
</dbReference>
<dbReference type="ExpressionAtlas" id="Q9SW33">
    <property type="expression patterns" value="baseline and differential"/>
</dbReference>
<dbReference type="GO" id="GO:0009507">
    <property type="term" value="C:chloroplast"/>
    <property type="evidence" value="ECO:0007005"/>
    <property type="project" value="TAIR"/>
</dbReference>
<dbReference type="GO" id="GO:0009543">
    <property type="term" value="C:chloroplast thylakoid lumen"/>
    <property type="evidence" value="ECO:0007669"/>
    <property type="project" value="UniProtKB-SubCell"/>
</dbReference>
<dbReference type="GO" id="GO:0005829">
    <property type="term" value="C:cytosol"/>
    <property type="evidence" value="ECO:0007005"/>
    <property type="project" value="TAIR"/>
</dbReference>
<dbReference type="GO" id="GO:0009579">
    <property type="term" value="C:thylakoid"/>
    <property type="evidence" value="ECO:0007005"/>
    <property type="project" value="TAIR"/>
</dbReference>
<dbReference type="GO" id="GO:0031977">
    <property type="term" value="C:thylakoid lumen"/>
    <property type="evidence" value="ECO:0007005"/>
    <property type="project" value="TAIR"/>
</dbReference>
<dbReference type="InterPro" id="IPR037734">
    <property type="entry name" value="Thylakoid_lumenal_17.9"/>
</dbReference>
<dbReference type="PANTHER" id="PTHR36783">
    <property type="entry name" value="THYLAKOID LUMENAL 17.9 KDA PROTEIN, CHLOROPLASTIC"/>
    <property type="match status" value="1"/>
</dbReference>
<dbReference type="PANTHER" id="PTHR36783:SF2">
    <property type="entry name" value="THYLAKOID LUMENAL 17.9 KDA PROTEIN, CHLOROPLASTIC"/>
    <property type="match status" value="1"/>
</dbReference>
<feature type="transit peptide" description="Chloroplast" evidence="1">
    <location>
        <begin position="1"/>
        <end status="unknown"/>
    </location>
</feature>
<feature type="transit peptide" description="Thylakoid" evidence="2">
    <location>
        <begin status="unknown"/>
        <end position="63"/>
    </location>
</feature>
<feature type="chain" id="PRO_0000022535" description="Thylakoid lumenal 17.9 kDa protein, chloroplastic">
    <location>
        <begin position="64"/>
        <end position="225"/>
    </location>
</feature>
<comment type="subcellular location">
    <subcellularLocation>
        <location evidence="2">Plastid</location>
        <location evidence="2">Chloroplast thylakoid lumen</location>
    </subcellularLocation>
</comment>